<dbReference type="EMBL" id="U50931">
    <property type="protein sequence ID" value="AAC51728.1"/>
    <property type="molecule type" value="Genomic_DNA"/>
</dbReference>
<dbReference type="EMBL" id="U50930">
    <property type="protein sequence ID" value="AAC51728.1"/>
    <property type="status" value="JOINED"/>
    <property type="molecule type" value="Genomic_DNA"/>
</dbReference>
<dbReference type="EMBL" id="X92744">
    <property type="protein sequence ID" value="CAA63405.1"/>
    <property type="molecule type" value="mRNA"/>
</dbReference>
<dbReference type="EMBL" id="U73945">
    <property type="protein sequence ID" value="AAB49758.1"/>
    <property type="molecule type" value="mRNA"/>
</dbReference>
<dbReference type="EMBL" id="BC033298">
    <property type="protein sequence ID" value="AAH33298.1"/>
    <property type="molecule type" value="mRNA"/>
</dbReference>
<dbReference type="EMBL" id="BC047677">
    <property type="protein sequence ID" value="AAH47677.1"/>
    <property type="molecule type" value="mRNA"/>
</dbReference>
<dbReference type="EMBL" id="Z50788">
    <property type="protein sequence ID" value="CAA90650.1"/>
    <property type="molecule type" value="mRNA"/>
</dbReference>
<dbReference type="CCDS" id="CCDS5959.1"/>
<dbReference type="PIR" id="S66282">
    <property type="entry name" value="S66282"/>
</dbReference>
<dbReference type="RefSeq" id="NP_005209.1">
    <property type="nucleotide sequence ID" value="NM_005218.4"/>
</dbReference>
<dbReference type="PDB" id="1E4S">
    <property type="method" value="NMR"/>
    <property type="chains" value="A=33-68"/>
</dbReference>
<dbReference type="PDB" id="1IJU">
    <property type="method" value="X-ray"/>
    <property type="resolution" value="1.40 A"/>
    <property type="chains" value="A/B/C/D=33-68"/>
</dbReference>
<dbReference type="PDB" id="1IJV">
    <property type="method" value="X-ray"/>
    <property type="resolution" value="1.20 A"/>
    <property type="chains" value="A/B=33-68"/>
</dbReference>
<dbReference type="PDB" id="1KJ5">
    <property type="method" value="NMR"/>
    <property type="chains" value="A=33-68"/>
</dbReference>
<dbReference type="PDB" id="2NLB">
    <property type="method" value="X-ray"/>
    <property type="resolution" value="1.85 A"/>
    <property type="chains" value="A/B/C/D=33-68"/>
</dbReference>
<dbReference type="PDB" id="2NLC">
    <property type="method" value="X-ray"/>
    <property type="resolution" value="1.65 A"/>
    <property type="chains" value="A/B/C/D=33-68"/>
</dbReference>
<dbReference type="PDB" id="2NLD">
    <property type="method" value="X-ray"/>
    <property type="resolution" value="1.49 A"/>
    <property type="chains" value="A/B=33-68"/>
</dbReference>
<dbReference type="PDB" id="2NLE">
    <property type="method" value="X-ray"/>
    <property type="resolution" value="1.35 A"/>
    <property type="chains" value="A/B=33-68"/>
</dbReference>
<dbReference type="PDB" id="2NLF">
    <property type="method" value="X-ray"/>
    <property type="resolution" value="1.45 A"/>
    <property type="chains" value="A/B=33-68"/>
</dbReference>
<dbReference type="PDB" id="2NLG">
    <property type="method" value="X-ray"/>
    <property type="resolution" value="1.65 A"/>
    <property type="chains" value="A/B/C/D=33-68"/>
</dbReference>
<dbReference type="PDB" id="2NLH">
    <property type="method" value="X-ray"/>
    <property type="resolution" value="1.85 A"/>
    <property type="chains" value="A/B/C/D=33-68"/>
</dbReference>
<dbReference type="PDB" id="2NLP">
    <property type="method" value="X-ray"/>
    <property type="resolution" value="1.85 A"/>
    <property type="chains" value="A/B/C/D=33-68"/>
</dbReference>
<dbReference type="PDB" id="2NLQ">
    <property type="method" value="X-ray"/>
    <property type="resolution" value="1.80 A"/>
    <property type="chains" value="A/B/C/D=33-68"/>
</dbReference>
<dbReference type="PDB" id="2NLS">
    <property type="method" value="X-ray"/>
    <property type="resolution" value="0.98 A"/>
    <property type="chains" value="A=33-68"/>
</dbReference>
<dbReference type="PDB" id="2PLZ">
    <property type="method" value="X-ray"/>
    <property type="resolution" value="1.36 A"/>
    <property type="chains" value="A=33-68"/>
</dbReference>
<dbReference type="PDBsum" id="1E4S"/>
<dbReference type="PDBsum" id="1IJU"/>
<dbReference type="PDBsum" id="1IJV"/>
<dbReference type="PDBsum" id="1KJ5"/>
<dbReference type="PDBsum" id="2NLB"/>
<dbReference type="PDBsum" id="2NLC"/>
<dbReference type="PDBsum" id="2NLD"/>
<dbReference type="PDBsum" id="2NLE"/>
<dbReference type="PDBsum" id="2NLF"/>
<dbReference type="PDBsum" id="2NLG"/>
<dbReference type="PDBsum" id="2NLH"/>
<dbReference type="PDBsum" id="2NLP"/>
<dbReference type="PDBsum" id="2NLQ"/>
<dbReference type="PDBsum" id="2NLS"/>
<dbReference type="PDBsum" id="2PLZ"/>
<dbReference type="SMR" id="P60022"/>
<dbReference type="BioGRID" id="108036">
    <property type="interactions" value="10"/>
</dbReference>
<dbReference type="FunCoup" id="P60022">
    <property type="interactions" value="61"/>
</dbReference>
<dbReference type="IntAct" id="P60022">
    <property type="interactions" value="11"/>
</dbReference>
<dbReference type="MINT" id="P60022"/>
<dbReference type="STRING" id="9606.ENSP00000297439"/>
<dbReference type="TCDB" id="1.C.85.1.1">
    <property type="family name" value="the pore-forming Beta-defensin (Beta-defensin) family"/>
</dbReference>
<dbReference type="GlyConnect" id="2922">
    <property type="glycosylation" value="1 O-Linked glycan (1 site)"/>
</dbReference>
<dbReference type="BioMuta" id="DEFB1"/>
<dbReference type="DMDM" id="38503374"/>
<dbReference type="jPOST" id="P60022"/>
<dbReference type="MassIVE" id="P60022"/>
<dbReference type="PaxDb" id="9606-ENSP00000297439"/>
<dbReference type="PeptideAtlas" id="P60022"/>
<dbReference type="ProteomicsDB" id="57181"/>
<dbReference type="Antibodypedia" id="8194">
    <property type="antibodies" value="442 antibodies from 29 providers"/>
</dbReference>
<dbReference type="DNASU" id="1672"/>
<dbReference type="Ensembl" id="ENST00000297439.4">
    <property type="protein sequence ID" value="ENSP00000297439.3"/>
    <property type="gene ID" value="ENSG00000164825.4"/>
</dbReference>
<dbReference type="Ensembl" id="ENST00000642865.2">
    <property type="protein sequence ID" value="ENSP00000494448.1"/>
    <property type="gene ID" value="ENSG00000284881.2"/>
</dbReference>
<dbReference type="GeneID" id="1672"/>
<dbReference type="KEGG" id="hsa:1672"/>
<dbReference type="MANE-Select" id="ENST00000297439.4">
    <property type="protein sequence ID" value="ENSP00000297439.3"/>
    <property type="RefSeq nucleotide sequence ID" value="NM_005218.4"/>
    <property type="RefSeq protein sequence ID" value="NP_005209.1"/>
</dbReference>
<dbReference type="UCSC" id="uc003wqs.4">
    <property type="organism name" value="human"/>
</dbReference>
<dbReference type="AGR" id="HGNC:2766"/>
<dbReference type="CTD" id="1672"/>
<dbReference type="DisGeNET" id="1672"/>
<dbReference type="GeneCards" id="DEFB1"/>
<dbReference type="HGNC" id="HGNC:2766">
    <property type="gene designation" value="DEFB1"/>
</dbReference>
<dbReference type="HPA" id="ENSG00000164825">
    <property type="expression patterns" value="Group enriched (kidney, pancreas, salivary gland)"/>
</dbReference>
<dbReference type="MIM" id="602056">
    <property type="type" value="gene"/>
</dbReference>
<dbReference type="neXtProt" id="NX_P60022"/>
<dbReference type="OpenTargets" id="ENSG00000164825"/>
<dbReference type="PharmGKB" id="PA27243"/>
<dbReference type="VEuPathDB" id="HostDB:ENSG00000164825"/>
<dbReference type="eggNOG" id="ENOG502TDMV">
    <property type="taxonomic scope" value="Eukaryota"/>
</dbReference>
<dbReference type="GeneTree" id="ENSGT00390000017014"/>
<dbReference type="HOGENOM" id="CLU_189296_1_0_1"/>
<dbReference type="InParanoid" id="P60022"/>
<dbReference type="OMA" id="SGKAKCC"/>
<dbReference type="OrthoDB" id="9622366at2759"/>
<dbReference type="PAN-GO" id="P60022">
    <property type="GO annotations" value="5 GO annotations based on evolutionary models"/>
</dbReference>
<dbReference type="PhylomeDB" id="P60022"/>
<dbReference type="PathwayCommons" id="P60022"/>
<dbReference type="Reactome" id="R-HSA-1461957">
    <property type="pathway name" value="Beta defensins"/>
</dbReference>
<dbReference type="Reactome" id="R-HSA-1461973">
    <property type="pathway name" value="Defensins"/>
</dbReference>
<dbReference type="SignaLink" id="P60022"/>
<dbReference type="BioGRID-ORCS" id="1672">
    <property type="hits" value="11 hits in 1145 CRISPR screens"/>
</dbReference>
<dbReference type="EvolutionaryTrace" id="P60022"/>
<dbReference type="GeneWiki" id="Defensin,_beta_1"/>
<dbReference type="GenomeRNAi" id="1672"/>
<dbReference type="Pharos" id="P60022">
    <property type="development level" value="Tbio"/>
</dbReference>
<dbReference type="PRO" id="PR:P60022"/>
<dbReference type="Proteomes" id="UP000005640">
    <property type="component" value="Chromosome 8"/>
</dbReference>
<dbReference type="RNAct" id="P60022">
    <property type="molecule type" value="protein"/>
</dbReference>
<dbReference type="Bgee" id="ENSG00000164825">
    <property type="expression patterns" value="Expressed in adult mammalian kidney and 90 other cell types or tissues"/>
</dbReference>
<dbReference type="GO" id="GO:0070062">
    <property type="term" value="C:extracellular exosome"/>
    <property type="evidence" value="ECO:0007005"/>
    <property type="project" value="UniProtKB"/>
</dbReference>
<dbReference type="GO" id="GO:0005576">
    <property type="term" value="C:extracellular region"/>
    <property type="evidence" value="ECO:0000304"/>
    <property type="project" value="Reactome"/>
</dbReference>
<dbReference type="GO" id="GO:0005615">
    <property type="term" value="C:extracellular space"/>
    <property type="evidence" value="ECO:0000314"/>
    <property type="project" value="UniProtKB"/>
</dbReference>
<dbReference type="GO" id="GO:0005796">
    <property type="term" value="C:Golgi lumen"/>
    <property type="evidence" value="ECO:0000304"/>
    <property type="project" value="Reactome"/>
</dbReference>
<dbReference type="GO" id="GO:0016020">
    <property type="term" value="C:membrane"/>
    <property type="evidence" value="ECO:0000314"/>
    <property type="project" value="UniProtKB"/>
</dbReference>
<dbReference type="GO" id="GO:1990742">
    <property type="term" value="C:microvesicle"/>
    <property type="evidence" value="ECO:0000314"/>
    <property type="project" value="UniProtKB"/>
</dbReference>
<dbReference type="GO" id="GO:0097225">
    <property type="term" value="C:sperm midpiece"/>
    <property type="evidence" value="ECO:0000314"/>
    <property type="project" value="UniProtKB"/>
</dbReference>
<dbReference type="GO" id="GO:0031731">
    <property type="term" value="F:CCR6 chemokine receptor binding"/>
    <property type="evidence" value="ECO:0000314"/>
    <property type="project" value="UniProtKB"/>
</dbReference>
<dbReference type="GO" id="GO:0042802">
    <property type="term" value="F:identical protein binding"/>
    <property type="evidence" value="ECO:0000314"/>
    <property type="project" value="UniProtKB"/>
</dbReference>
<dbReference type="GO" id="GO:0019731">
    <property type="term" value="P:antibacterial humoral response"/>
    <property type="evidence" value="ECO:0000314"/>
    <property type="project" value="UniProtKB"/>
</dbReference>
<dbReference type="GO" id="GO:0061844">
    <property type="term" value="P:antimicrobial humoral immune response mediated by antimicrobial peptide"/>
    <property type="evidence" value="ECO:0000314"/>
    <property type="project" value="UniProtKB"/>
</dbReference>
<dbReference type="GO" id="GO:0019722">
    <property type="term" value="P:calcium-mediated signaling"/>
    <property type="evidence" value="ECO:0000314"/>
    <property type="project" value="UniProtKB"/>
</dbReference>
<dbReference type="GO" id="GO:0006935">
    <property type="term" value="P:chemotaxis"/>
    <property type="evidence" value="ECO:0000304"/>
    <property type="project" value="ProtInc"/>
</dbReference>
<dbReference type="GO" id="GO:0042742">
    <property type="term" value="P:defense response to bacterium"/>
    <property type="evidence" value="ECO:0000315"/>
    <property type="project" value="MGI"/>
</dbReference>
<dbReference type="GO" id="GO:0050829">
    <property type="term" value="P:defense response to Gram-negative bacterium"/>
    <property type="evidence" value="ECO:0000315"/>
    <property type="project" value="UniProtKB"/>
</dbReference>
<dbReference type="GO" id="GO:0050830">
    <property type="term" value="P:defense response to Gram-positive bacterium"/>
    <property type="evidence" value="ECO:0000314"/>
    <property type="project" value="UniProtKB"/>
</dbReference>
<dbReference type="GO" id="GO:0007186">
    <property type="term" value="P:G protein-coupled receptor signaling pathway"/>
    <property type="evidence" value="ECO:0000304"/>
    <property type="project" value="ProtInc"/>
</dbReference>
<dbReference type="GO" id="GO:0006955">
    <property type="term" value="P:immune response"/>
    <property type="evidence" value="ECO:0000304"/>
    <property type="project" value="ProtInc"/>
</dbReference>
<dbReference type="GO" id="GO:0045087">
    <property type="term" value="P:innate immune response"/>
    <property type="evidence" value="ECO:0000250"/>
    <property type="project" value="UniProtKB"/>
</dbReference>
<dbReference type="GO" id="GO:0002227">
    <property type="term" value="P:innate immune response in mucosa"/>
    <property type="evidence" value="ECO:0000314"/>
    <property type="project" value="UniProtKB"/>
</dbReference>
<dbReference type="GO" id="GO:0060474">
    <property type="term" value="P:positive regulation of flagellated sperm motility involved in capacitation"/>
    <property type="evidence" value="ECO:0000315"/>
    <property type="project" value="UniProtKB"/>
</dbReference>
<dbReference type="GO" id="GO:0009617">
    <property type="term" value="P:response to bacterium"/>
    <property type="evidence" value="ECO:0000314"/>
    <property type="project" value="UniProtKB"/>
</dbReference>
<dbReference type="FunFam" id="3.10.360.10:FF:000001">
    <property type="entry name" value="Beta-defensin 1"/>
    <property type="match status" value="1"/>
</dbReference>
<dbReference type="Gene3D" id="3.10.360.10">
    <property type="entry name" value="Antimicrobial Peptide, Beta-defensin 2, Chain A"/>
    <property type="match status" value="1"/>
</dbReference>
<dbReference type="InterPro" id="IPR001855">
    <property type="entry name" value="Defensin_beta-like"/>
</dbReference>
<dbReference type="PANTHER" id="PTHR21388:SF9">
    <property type="entry name" value="BETA-DEFENSIN 1"/>
    <property type="match status" value="1"/>
</dbReference>
<dbReference type="PANTHER" id="PTHR21388">
    <property type="entry name" value="BETA-DEFENSIN-RELATED"/>
    <property type="match status" value="1"/>
</dbReference>
<dbReference type="Pfam" id="PF00711">
    <property type="entry name" value="Defensin_beta"/>
    <property type="match status" value="1"/>
</dbReference>
<dbReference type="SUPFAM" id="SSF57392">
    <property type="entry name" value="Defensin-like"/>
    <property type="match status" value="1"/>
</dbReference>
<evidence type="ECO:0000255" key="1"/>
<evidence type="ECO:0000269" key="2">
    <source>
    </source>
</evidence>
<evidence type="ECO:0000269" key="3">
    <source>
    </source>
</evidence>
<evidence type="ECO:0000269" key="4">
    <source>
    </source>
</evidence>
<evidence type="ECO:0000305" key="5"/>
<evidence type="ECO:0007744" key="6">
    <source>
    </source>
</evidence>
<evidence type="ECO:0007829" key="7">
    <source>
        <dbReference type="PDB" id="1KJ5"/>
    </source>
</evidence>
<evidence type="ECO:0007829" key="8">
    <source>
        <dbReference type="PDB" id="2NLS"/>
    </source>
</evidence>
<keyword id="KW-0002">3D-structure</keyword>
<keyword id="KW-0044">Antibiotic</keyword>
<keyword id="KW-0929">Antimicrobial</keyword>
<keyword id="KW-0211">Defensin</keyword>
<keyword id="KW-0903">Direct protein sequencing</keyword>
<keyword id="KW-1015">Disulfide bond</keyword>
<keyword id="KW-0472">Membrane</keyword>
<keyword id="KW-1267">Proteomics identification</keyword>
<keyword id="KW-1185">Reference proteome</keyword>
<keyword id="KW-0964">Secreted</keyword>
<keyword id="KW-0732">Signal</keyword>
<organism>
    <name type="scientific">Homo sapiens</name>
    <name type="common">Human</name>
    <dbReference type="NCBI Taxonomy" id="9606"/>
    <lineage>
        <taxon>Eukaryota</taxon>
        <taxon>Metazoa</taxon>
        <taxon>Chordata</taxon>
        <taxon>Craniata</taxon>
        <taxon>Vertebrata</taxon>
        <taxon>Euteleostomi</taxon>
        <taxon>Mammalia</taxon>
        <taxon>Eutheria</taxon>
        <taxon>Euarchontoglires</taxon>
        <taxon>Primates</taxon>
        <taxon>Haplorrhini</taxon>
        <taxon>Catarrhini</taxon>
        <taxon>Hominidae</taxon>
        <taxon>Homo</taxon>
    </lineage>
</organism>
<accession>P60022</accession>
<accession>Q09753</accession>
<feature type="signal peptide" evidence="1 6">
    <location>
        <begin position="1"/>
        <end position="21"/>
    </location>
</feature>
<feature type="propeptide" id="PRO_0000006899" evidence="4">
    <location>
        <begin position="22"/>
        <end position="32"/>
    </location>
</feature>
<feature type="peptide" id="PRO_0000006900" description="Beta-defensin 1">
    <location>
        <begin position="33"/>
        <end position="68"/>
    </location>
</feature>
<feature type="disulfide bond">
    <location>
        <begin position="37"/>
        <end position="66"/>
    </location>
</feature>
<feature type="disulfide bond">
    <location>
        <begin position="44"/>
        <end position="59"/>
    </location>
</feature>
<feature type="disulfide bond">
    <location>
        <begin position="49"/>
        <end position="67"/>
    </location>
</feature>
<feature type="sequence variant" id="VAR_018405" description="In dbSNP:rs2738047.">
    <original>V</original>
    <variation>I</variation>
    <location>
        <position position="38"/>
    </location>
</feature>
<feature type="sequence variant" id="VAR_014925" description="In dbSNP:rs1800967.">
    <original>A</original>
    <variation>V</variation>
    <location>
        <position position="48"/>
    </location>
</feature>
<feature type="sequence variant" id="VAR_014926" description="In dbSNP:rs1800968.">
    <original>C</original>
    <variation>S</variation>
    <location>
        <position position="67"/>
    </location>
</feature>
<feature type="helix" evidence="8">
    <location>
        <begin position="34"/>
        <end position="40"/>
    </location>
</feature>
<feature type="strand" evidence="8">
    <location>
        <begin position="43"/>
        <end position="47"/>
    </location>
</feature>
<feature type="strand" evidence="7">
    <location>
        <begin position="50"/>
        <end position="52"/>
    </location>
</feature>
<feature type="strand" evidence="8">
    <location>
        <begin position="55"/>
        <end position="59"/>
    </location>
</feature>
<feature type="turn" evidence="8">
    <location>
        <begin position="60"/>
        <end position="63"/>
    </location>
</feature>
<feature type="strand" evidence="8">
    <location>
        <begin position="64"/>
        <end position="67"/>
    </location>
</feature>
<gene>
    <name type="primary">DEFB1</name>
    <name type="synonym">BD1</name>
    <name type="synonym">HBD1</name>
</gene>
<reference key="1">
    <citation type="journal article" date="1997" name="Genomics">
        <title>The human beta-defensin-1 and alpha-defensins are encoded by adjacent genes: two peptide families with differing disulfide topology share a common ancestry.</title>
        <authorList>
            <person name="Liu L."/>
            <person name="Zhao C."/>
            <person name="Heng H.H.Q."/>
            <person name="Ganz T."/>
        </authorList>
    </citation>
    <scope>NUCLEOTIDE SEQUENCE [GENOMIC DNA / MRNA]</scope>
</reference>
<reference key="2">
    <citation type="submission" date="1996-10" db="EMBL/GenBank/DDBJ databases">
        <authorList>
            <person name="Zhao C."/>
        </authorList>
    </citation>
    <scope>NUCLEOTIDE SEQUENCE [MRNA]</scope>
    <source>
        <tissue>Kidney</tissue>
    </source>
</reference>
<reference key="3">
    <citation type="journal article" date="1997" name="Am. J. Respir. Cell Mol. Biol.">
        <title>Human airway epithelia express a beta-defensin.</title>
        <authorList>
            <person name="McCray P.B. Jr."/>
            <person name="Bentley L."/>
        </authorList>
    </citation>
    <scope>NUCLEOTIDE SEQUENCE [GENOMIC DNA / MRNA]</scope>
</reference>
<reference key="4">
    <citation type="journal article" date="2004" name="Genome Res.">
        <title>The status, quality, and expansion of the NIH full-length cDNA project: the Mammalian Gene Collection (MGC).</title>
        <authorList>
            <consortium name="The MGC Project Team"/>
        </authorList>
    </citation>
    <scope>NUCLEOTIDE SEQUENCE [LARGE SCALE MRNA]</scope>
    <source>
        <tissue>Colon</tissue>
        <tissue>Skin</tissue>
    </source>
</reference>
<reference key="5">
    <citation type="journal article" date="1995" name="FEBS Lett.">
        <title>hBD-1: a novel beta-defensin from human plasma.</title>
        <authorList>
            <person name="Bensch K.W."/>
            <person name="Raida M."/>
            <person name="Maegert H.-J."/>
            <person name="Schulz-Knappe P."/>
            <person name="Forssmann W.-G."/>
        </authorList>
    </citation>
    <scope>NUCLEOTIDE SEQUENCE [MRNA] OF 33-68</scope>
    <scope>PROTEIN SEQUENCE OF 33-68</scope>
    <scope>SUBCELLULAR LOCATION</scope>
    <scope>TISSUE SPECIFICITY</scope>
    <scope>MASS SPECTROMETRY</scope>
    <source>
        <tissue>Kidney</tissue>
        <tissue>Plasma</tissue>
        <tissue>Vagina</tissue>
    </source>
</reference>
<reference key="6">
    <citation type="journal article" date="2002" name="J. Pept. Res.">
        <title>Chemical synthesis of beta-defensins and LEAP-1/hepcidin.</title>
        <authorList>
            <person name="Kluever E."/>
            <person name="Schulz A."/>
            <person name="Forssmann W.-G."/>
            <person name="Adermann K."/>
        </authorList>
    </citation>
    <scope>SYNTHESIS OF 33-68</scope>
</reference>
<reference key="7">
    <citation type="journal article" date="2014" name="Sci. Transl. Med.">
        <title>Deficient human beta-defensin 1 underlies male infertility associated with poor sperm motility and genital tract infection.</title>
        <authorList>
            <person name="Diao R."/>
            <person name="Fok K.L."/>
            <person name="Chen H."/>
            <person name="Yu M.K."/>
            <person name="Duan Y."/>
            <person name="Chung C.M."/>
            <person name="Li Z."/>
            <person name="Wu H."/>
            <person name="Li Z."/>
            <person name="Zhang H."/>
            <person name="Ji Z."/>
            <person name="Zhen W."/>
            <person name="Ng C.F."/>
            <person name="Gui Y."/>
            <person name="Cai Z."/>
            <person name="Chan H.C."/>
        </authorList>
    </citation>
    <scope>FUNCTION</scope>
    <scope>TISSUE SPECIFICITY</scope>
    <scope>BINDING TO CCR6</scope>
</reference>
<reference key="8">
    <citation type="journal article" date="2013" name="J. Mol. Biol.">
        <title>Structural basis for the interaction of human beta-defensin 6 and its putative chemokine receptor CCR2 and breast cancer microvesicles.</title>
        <authorList>
            <person name="De Paula V.S."/>
            <person name="Gomes N.S."/>
            <person name="Lima L.G."/>
            <person name="Miyamoto C.A."/>
            <person name="Monteiro R.Q."/>
            <person name="Almeida F.C."/>
            <person name="Valente A.P."/>
        </authorList>
    </citation>
    <scope>SUBUNIT</scope>
    <scope>SUBCELLULAR LOCATION</scope>
</reference>
<reference key="9">
    <citation type="journal article" date="2015" name="Proteomics">
        <title>N-terminome analysis of the human mitochondrial proteome.</title>
        <authorList>
            <person name="Vaca Jacome A.S."/>
            <person name="Rabilloud T."/>
            <person name="Schaeffer-Reiss C."/>
            <person name="Rompais M."/>
            <person name="Ayoub D."/>
            <person name="Lane L."/>
            <person name="Bairoch A."/>
            <person name="Van Dorsselaer A."/>
            <person name="Carapito C."/>
        </authorList>
    </citation>
    <scope>CLEAVAGE OF SIGNAL PEPTIDE [LARGE SCALE ANALYSIS] AFTER GLY-21</scope>
    <scope>IDENTIFICATION BY MASS SPECTROMETRY [LARGE SCALE ANALYSIS]</scope>
</reference>
<reference key="10">
    <citation type="journal article" date="2001" name="J. Biol. Chem.">
        <title>The structure of human beta-defensin-1: new insights into structural properties of beta-defensins.</title>
        <authorList>
            <person name="Hoover D.M."/>
            <person name="Chertov O."/>
            <person name="Lubkowski J."/>
        </authorList>
    </citation>
    <scope>X-RAY CRYSTALLOGRAPHY (1.2 ANGSTROMS) OF 33-68</scope>
</reference>
<reference key="11">
    <citation type="journal article" date="2001" name="Protein Sci.">
        <title>Structure determination of human and murine beta-defensins reveals structural conservation in the absence of significant sequence similarity.</title>
        <authorList>
            <person name="Bauer F."/>
            <person name="Schweimer K."/>
            <person name="Kluever E."/>
            <person name="Conejo-Garcia J.-R."/>
            <person name="Forssmann W.-G."/>
            <person name="Roesch P."/>
            <person name="Adermann K."/>
            <person name="Sticht H."/>
        </authorList>
    </citation>
    <scope>STRUCTURE BY NMR OF 33-68</scope>
</reference>
<sequence length="68" mass="7420">MRTSYLLLFTLCLLLSEMASGGNFLTGLGHRSDHYNCVSSGGQCLYSACPIFTKIQGTCYRGKAKCCK</sequence>
<comment type="function">
    <text evidence="3">Has bactericidal activity. May act as a ligand for C-C chemokine receptor CCR6. Positively regulates the sperm motility and bactericidal activity in a CCR6-dependent manner. Binds to CCR6 and triggers Ca2+ mobilization in the sperm which is important for its motility (PubMed:25122636).</text>
</comment>
<comment type="subunit">
    <text evidence="2">Monomer (PubMed:23938203). Homodimer (PubMed:23938203).</text>
</comment>
<comment type="interaction">
    <interactant intactId="EBI-7200390">
        <id>P60022</id>
    </interactant>
    <interactant intactId="EBI-12092171">
        <id>Q12797-6</id>
        <label>ASPH</label>
    </interactant>
    <organismsDiffer>false</organismsDiffer>
    <experiments>3</experiments>
</comment>
<comment type="subcellular location">
    <subcellularLocation>
        <location evidence="4">Secreted</location>
    </subcellularLocation>
    <subcellularLocation>
        <location evidence="2">Membrane</location>
    </subcellularLocation>
    <text evidence="2">Associates with tumor cell membrane-derived microvesicles (PubMed:23938203).</text>
</comment>
<comment type="tissue specificity">
    <text evidence="3 4">Blood plasma. Sperm. Highly expressed in the lower head and midpiece of sperm. Significantly reduced levels found in the sperms of asthenozoospermia and leukocytospermia patients (at protein level).</text>
</comment>
<comment type="mass spectrometry" mass="3928.0" error="0.5" method="Electrospray" evidence="4"/>
<comment type="similarity">
    <text evidence="5">Belongs to the beta-defensin family.</text>
</comment>
<comment type="online information" name="Atlas of Genetics and Cytogenetics in Oncology and Haematology">
    <link uri="https://atlasgeneticsoncology.org/gene/44352/DEFB1"/>
</comment>
<name>DEFB1_HUMAN</name>
<protein>
    <recommendedName>
        <fullName>Beta-defensin 1</fullName>
        <shortName>BD-1</shortName>
        <shortName>hBD-1</shortName>
    </recommendedName>
    <alternativeName>
        <fullName>Defensin, beta 1</fullName>
    </alternativeName>
</protein>
<proteinExistence type="evidence at protein level"/>